<evidence type="ECO:0000250" key="1">
    <source>
        <dbReference type="UniProtKB" id="P02699"/>
    </source>
</evidence>
<evidence type="ECO:0000250" key="2">
    <source>
        <dbReference type="UniProtKB" id="P08100"/>
    </source>
</evidence>
<evidence type="ECO:0000250" key="3">
    <source>
        <dbReference type="UniProtKB" id="P32309"/>
    </source>
</evidence>
<evidence type="ECO:0000250" key="4">
    <source>
        <dbReference type="UniProtKB" id="P35359"/>
    </source>
</evidence>
<evidence type="ECO:0000255" key="5"/>
<evidence type="ECO:0000255" key="6">
    <source>
        <dbReference type="PROSITE-ProRule" id="PRU00521"/>
    </source>
</evidence>
<evidence type="ECO:0000256" key="7">
    <source>
        <dbReference type="SAM" id="MobiDB-lite"/>
    </source>
</evidence>
<evidence type="ECO:0000305" key="8"/>
<organism>
    <name type="scientific">Chelon labrosus</name>
    <name type="common">Thicklip grey mullet</name>
    <name type="synonym">Mugil chelo</name>
    <dbReference type="NCBI Taxonomy" id="48171"/>
    <lineage>
        <taxon>Eukaryota</taxon>
        <taxon>Metazoa</taxon>
        <taxon>Chordata</taxon>
        <taxon>Craniata</taxon>
        <taxon>Vertebrata</taxon>
        <taxon>Euteleostomi</taxon>
        <taxon>Actinopterygii</taxon>
        <taxon>Neopterygii</taxon>
        <taxon>Teleostei</taxon>
        <taxon>Neoteleostei</taxon>
        <taxon>Acanthomorphata</taxon>
        <taxon>Ovalentaria</taxon>
        <taxon>Mugilomorphae</taxon>
        <taxon>Mugilidae</taxon>
        <taxon>Chelon</taxon>
    </lineage>
</organism>
<gene>
    <name type="primary">rho</name>
</gene>
<feature type="chain" id="PRO_0000197659" description="Rhodopsin">
    <location>
        <begin position="1"/>
        <end position="353"/>
    </location>
</feature>
<feature type="topological domain" description="Extracellular" evidence="8">
    <location>
        <begin position="1"/>
        <end position="36"/>
    </location>
</feature>
<feature type="transmembrane region" description="Helical; Name=1" evidence="1">
    <location>
        <begin position="37"/>
        <end position="61"/>
    </location>
</feature>
<feature type="topological domain" description="Cytoplasmic" evidence="8">
    <location>
        <begin position="62"/>
        <end position="73"/>
    </location>
</feature>
<feature type="transmembrane region" description="Helical; Name=2" evidence="1">
    <location>
        <begin position="74"/>
        <end position="96"/>
    </location>
</feature>
<feature type="topological domain" description="Extracellular" evidence="8">
    <location>
        <begin position="97"/>
        <end position="110"/>
    </location>
</feature>
<feature type="transmembrane region" description="Helical; Name=3" evidence="1">
    <location>
        <begin position="111"/>
        <end position="133"/>
    </location>
</feature>
<feature type="topological domain" description="Cytoplasmic" evidence="8">
    <location>
        <begin position="134"/>
        <end position="152"/>
    </location>
</feature>
<feature type="transmembrane region" description="Helical; Name=4" evidence="1">
    <location>
        <begin position="153"/>
        <end position="173"/>
    </location>
</feature>
<feature type="topological domain" description="Extracellular" evidence="8">
    <location>
        <begin position="174"/>
        <end position="202"/>
    </location>
</feature>
<feature type="transmembrane region" description="Helical; Name=5" evidence="1">
    <location>
        <begin position="203"/>
        <end position="224"/>
    </location>
</feature>
<feature type="topological domain" description="Cytoplasmic" evidence="8">
    <location>
        <begin position="225"/>
        <end position="252"/>
    </location>
</feature>
<feature type="transmembrane region" description="Helical; Name=6" evidence="1">
    <location>
        <begin position="253"/>
        <end position="274"/>
    </location>
</feature>
<feature type="topological domain" description="Extracellular" evidence="8">
    <location>
        <begin position="275"/>
        <end position="286"/>
    </location>
</feature>
<feature type="transmembrane region" description="Helical; Name=7" evidence="1">
    <location>
        <begin position="287"/>
        <end position="308"/>
    </location>
</feature>
<feature type="topological domain" description="Cytoplasmic" evidence="8">
    <location>
        <begin position="309"/>
        <end position="353"/>
    </location>
</feature>
<feature type="region of interest" description="Disordered" evidence="7">
    <location>
        <begin position="330"/>
        <end position="353"/>
    </location>
</feature>
<feature type="short sequence motif" description="'Ionic lock' involved in activated form stabilization" evidence="1">
    <location>
        <begin position="134"/>
        <end position="136"/>
    </location>
</feature>
<feature type="compositionally biased region" description="Low complexity" evidence="7">
    <location>
        <begin position="334"/>
        <end position="353"/>
    </location>
</feature>
<feature type="site" description="Plays an important role in the conformation switch to the active conformation" evidence="1">
    <location>
        <position position="113"/>
    </location>
</feature>
<feature type="modified residue" description="N6-(retinylidene)lysine" evidence="1">
    <location>
        <position position="296"/>
    </location>
</feature>
<feature type="lipid moiety-binding region" description="S-palmitoyl cysteine" evidence="1">
    <location>
        <position position="322"/>
    </location>
</feature>
<feature type="lipid moiety-binding region" description="S-palmitoyl cysteine" evidence="1">
    <location>
        <position position="323"/>
    </location>
</feature>
<feature type="glycosylation site" description="N-linked (GlcNAc...) asparagine" evidence="5">
    <location>
        <position position="2"/>
    </location>
</feature>
<feature type="glycosylation site" description="N-linked (GlcNAc...) asparagine" evidence="5">
    <location>
        <position position="15"/>
    </location>
</feature>
<feature type="glycosylation site" description="N-linked (GlcNAc...) asparagine" evidence="5">
    <location>
        <position position="200"/>
    </location>
</feature>
<feature type="disulfide bond" evidence="6">
    <location>
        <begin position="110"/>
        <end position="187"/>
    </location>
</feature>
<proteinExistence type="evidence at transcript level"/>
<protein>
    <recommendedName>
        <fullName>Rhodopsin</fullName>
    </recommendedName>
</protein>
<sequence length="353" mass="39505">MNGTEGPYFYIPMVNTTGIVRSPYEYPQYYLVNPAAYAALGAYMFLLILVGFPVNFLTLYVTLEHKKLRTPLNYILLNLAVADLFMVLGGFTTTMYTSMHGYFVLGRLGCNVEGFFATLGGEIALWSLVVLAIERWVVVCKPISNFRFSEDHAIMGLAFTWVMASACAVPPLVGWSRYIPEGMQCSCGIDYYTRAEGFNNESFVIYMFVCHFLIPLVVVFFCYGRLLCAVKEAAAAQQESETTQRAEREVSRMVVIMVVAFLVCWCPYAGVAWYIFTHQGSEFGPLFMTFPAFFAKSSSIYNPMIYICMNKQFRHCMITTLCCGKNPFEEEEGASTTSKTEASSVSSSSVSPA</sequence>
<keyword id="KW-0966">Cell projection</keyword>
<keyword id="KW-0157">Chromophore</keyword>
<keyword id="KW-1015">Disulfide bond</keyword>
<keyword id="KW-0297">G-protein coupled receptor</keyword>
<keyword id="KW-0325">Glycoprotein</keyword>
<keyword id="KW-0449">Lipoprotein</keyword>
<keyword id="KW-0472">Membrane</keyword>
<keyword id="KW-0564">Palmitate</keyword>
<keyword id="KW-0597">Phosphoprotein</keyword>
<keyword id="KW-0600">Photoreceptor protein</keyword>
<keyword id="KW-0675">Receptor</keyword>
<keyword id="KW-0681">Retinal protein</keyword>
<keyword id="KW-0716">Sensory transduction</keyword>
<keyword id="KW-0807">Transducer</keyword>
<keyword id="KW-0812">Transmembrane</keyword>
<keyword id="KW-1133">Transmembrane helix</keyword>
<keyword id="KW-0844">Vision</keyword>
<name>OPSD_CHELB</name>
<reference key="1">
    <citation type="submission" date="1999-01" db="EMBL/GenBank/DDBJ databases">
        <title>Comparative analysis of opsins in Mediterranian coastal fish.</title>
        <authorList>
            <person name="Archer S.N."/>
            <person name="Hirano J."/>
        </authorList>
    </citation>
    <scope>NUCLEOTIDE SEQUENCE [MRNA]</scope>
    <source>
        <tissue>Retina</tissue>
    </source>
</reference>
<dbReference type="EMBL" id="Y18669">
    <property type="protein sequence ID" value="CAA77251.1"/>
    <property type="molecule type" value="mRNA"/>
</dbReference>
<dbReference type="SMR" id="Q9YGZ8"/>
<dbReference type="GlyCosmos" id="Q9YGZ8">
    <property type="glycosylation" value="3 sites, No reported glycans"/>
</dbReference>
<dbReference type="GO" id="GO:0016020">
    <property type="term" value="C:membrane"/>
    <property type="evidence" value="ECO:0000250"/>
    <property type="project" value="UniProtKB"/>
</dbReference>
<dbReference type="GO" id="GO:0097381">
    <property type="term" value="C:photoreceptor disc membrane"/>
    <property type="evidence" value="ECO:0000250"/>
    <property type="project" value="UniProtKB"/>
</dbReference>
<dbReference type="GO" id="GO:0005886">
    <property type="term" value="C:plasma membrane"/>
    <property type="evidence" value="ECO:0000250"/>
    <property type="project" value="UniProtKB"/>
</dbReference>
<dbReference type="GO" id="GO:0005502">
    <property type="term" value="F:11-cis retinal binding"/>
    <property type="evidence" value="ECO:0000250"/>
    <property type="project" value="UniProtKB"/>
</dbReference>
<dbReference type="GO" id="GO:0008020">
    <property type="term" value="F:G protein-coupled photoreceptor activity"/>
    <property type="evidence" value="ECO:0000250"/>
    <property type="project" value="UniProtKB"/>
</dbReference>
<dbReference type="GO" id="GO:0016038">
    <property type="term" value="P:absorption of visible light"/>
    <property type="evidence" value="ECO:0000250"/>
    <property type="project" value="UniProtKB"/>
</dbReference>
<dbReference type="GO" id="GO:0016056">
    <property type="term" value="P:G protein-coupled opsin signaling pathway"/>
    <property type="evidence" value="ECO:0000250"/>
    <property type="project" value="UniProtKB"/>
</dbReference>
<dbReference type="GO" id="GO:0007601">
    <property type="term" value="P:visual perception"/>
    <property type="evidence" value="ECO:0007669"/>
    <property type="project" value="UniProtKB-KW"/>
</dbReference>
<dbReference type="CDD" id="cd15080">
    <property type="entry name" value="7tmA_MWS_opsin"/>
    <property type="match status" value="1"/>
</dbReference>
<dbReference type="FunFam" id="1.20.1070.10:FF:000018">
    <property type="entry name" value="Rhodopsin"/>
    <property type="match status" value="1"/>
</dbReference>
<dbReference type="Gene3D" id="1.20.1070.10">
    <property type="entry name" value="Rhodopsin 7-helix transmembrane proteins"/>
    <property type="match status" value="1"/>
</dbReference>
<dbReference type="InterPro" id="IPR050125">
    <property type="entry name" value="GPCR_opsins"/>
</dbReference>
<dbReference type="InterPro" id="IPR000276">
    <property type="entry name" value="GPCR_Rhodpsn"/>
</dbReference>
<dbReference type="InterPro" id="IPR017452">
    <property type="entry name" value="GPCR_Rhodpsn_7TM"/>
</dbReference>
<dbReference type="InterPro" id="IPR001760">
    <property type="entry name" value="Opsin"/>
</dbReference>
<dbReference type="InterPro" id="IPR027430">
    <property type="entry name" value="Retinal_BS"/>
</dbReference>
<dbReference type="InterPro" id="IPR000732">
    <property type="entry name" value="Rhodopsin"/>
</dbReference>
<dbReference type="InterPro" id="IPR019477">
    <property type="entry name" value="Rhodopsin_N"/>
</dbReference>
<dbReference type="PANTHER" id="PTHR24240">
    <property type="entry name" value="OPSIN"/>
    <property type="match status" value="1"/>
</dbReference>
<dbReference type="Pfam" id="PF00001">
    <property type="entry name" value="7tm_1"/>
    <property type="match status" value="1"/>
</dbReference>
<dbReference type="Pfam" id="PF10413">
    <property type="entry name" value="Rhodopsin_N"/>
    <property type="match status" value="1"/>
</dbReference>
<dbReference type="PRINTS" id="PR00237">
    <property type="entry name" value="GPCRRHODOPSN"/>
</dbReference>
<dbReference type="PRINTS" id="PR00238">
    <property type="entry name" value="OPSIN"/>
</dbReference>
<dbReference type="PRINTS" id="PR00579">
    <property type="entry name" value="RHODOPSIN"/>
</dbReference>
<dbReference type="SUPFAM" id="SSF81321">
    <property type="entry name" value="Family A G protein-coupled receptor-like"/>
    <property type="match status" value="1"/>
</dbReference>
<dbReference type="PROSITE" id="PS00237">
    <property type="entry name" value="G_PROTEIN_RECEP_F1_1"/>
    <property type="match status" value="1"/>
</dbReference>
<dbReference type="PROSITE" id="PS50262">
    <property type="entry name" value="G_PROTEIN_RECEP_F1_2"/>
    <property type="match status" value="1"/>
</dbReference>
<dbReference type="PROSITE" id="PS00238">
    <property type="entry name" value="OPSIN"/>
    <property type="match status" value="1"/>
</dbReference>
<comment type="function">
    <text evidence="1 2 3">Photoreceptor required for image-forming vision at low light intensity. While most salt water fish species use retinal as chromophore, most freshwater fish use 3-dehydroretinal, or a mixture of retinal and 3-dehydroretinal (By similarity). Light-induced isomerization of 11-cis to all-trans retinal triggers a conformational change that activates signaling via G-proteins. Subsequent receptor phosphorylation mediates displacement of the bound G-protein alpha subunit by arrestin and terminates signaling (By similarity).</text>
</comment>
<comment type="subcellular location">
    <subcellularLocation>
        <location evidence="2">Membrane</location>
        <topology evidence="2">Multi-pass membrane protein</topology>
    </subcellularLocation>
    <subcellularLocation>
        <location evidence="4">Cell projection</location>
        <location evidence="4">Cilium</location>
        <location evidence="4">Photoreceptor outer segment</location>
    </subcellularLocation>
    <text evidence="2">Synthesized in the inner segment (IS) of rod photoreceptor cells before vectorial transport to disk membranes in the rod outer segment (OS) photosensory cilia.</text>
</comment>
<comment type="PTM">
    <text evidence="1">Phosphorylated on some or all of the serine and threonine residues present in the C-terminal region.</text>
</comment>
<comment type="PTM">
    <text evidence="1">Contains one covalently linked retinal chromophore.</text>
</comment>
<comment type="similarity">
    <text evidence="6">Belongs to the G-protein coupled receptor 1 family. Opsin subfamily.</text>
</comment>
<accession>Q9YGZ8</accession>